<sequence length="292" mass="32757">MRLVGSQYKDMEDRLSPSARLVRSPGSQTRIHSIESILGFKGETLFHPAFPYGSGKTGKDTEHLSPKKDSNKHFDGVCRSTVMVSPDLPDADGGKLSDDENPKKKHRRNRTTFTTFQLHELERAFEKSHYPDVYSREELALKVNLPEVRVQVWFQNRRAKWRRQEKLEVSSIKLQESSMLSIPRSGPLSLGSGLPLEPWLTGPISTSSSPLQSLPSFITPQQAVPASYTPPQFLSSSTLNHSLPHIGAVCPPYQCSGFMDKFSLQEADPRNTSIASLRMKAKEHIQSIGKTW</sequence>
<evidence type="ECO:0000250" key="1"/>
<evidence type="ECO:0000255" key="2"/>
<evidence type="ECO:0000255" key="3">
    <source>
        <dbReference type="PROSITE-ProRule" id="PRU00108"/>
    </source>
</evidence>
<evidence type="ECO:0000255" key="4">
    <source>
        <dbReference type="PROSITE-ProRule" id="PRU00138"/>
    </source>
</evidence>
<evidence type="ECO:0000256" key="5">
    <source>
        <dbReference type="SAM" id="MobiDB-lite"/>
    </source>
</evidence>
<evidence type="ECO:0000305" key="6"/>
<dbReference type="EMBL" id="AF001909">
    <property type="protein sequence ID" value="AAB62327.1"/>
    <property type="molecule type" value="mRNA"/>
</dbReference>
<dbReference type="RefSeq" id="NP_571302.1">
    <property type="nucleotide sequence ID" value="NM_131227.1"/>
</dbReference>
<dbReference type="SMR" id="O42358"/>
<dbReference type="FunCoup" id="O42358">
    <property type="interactions" value="2"/>
</dbReference>
<dbReference type="STRING" id="7955.ENSDARP00000069319"/>
<dbReference type="PaxDb" id="7955-ENSDARP00000069319"/>
<dbReference type="GeneID" id="30474"/>
<dbReference type="KEGG" id="dre:30474"/>
<dbReference type="AGR" id="ZFIN:ZDB-GENE-990415-238"/>
<dbReference type="CTD" id="30474"/>
<dbReference type="ZFIN" id="ZDB-GENE-990415-238">
    <property type="gene designation" value="rx3"/>
</dbReference>
<dbReference type="eggNOG" id="KOG0490">
    <property type="taxonomic scope" value="Eukaryota"/>
</dbReference>
<dbReference type="InParanoid" id="O42358"/>
<dbReference type="OrthoDB" id="6159439at2759"/>
<dbReference type="PhylomeDB" id="O42358"/>
<dbReference type="PRO" id="PR:O42358"/>
<dbReference type="Proteomes" id="UP000000437">
    <property type="component" value="Chromosome 21"/>
</dbReference>
<dbReference type="GO" id="GO:0005634">
    <property type="term" value="C:nucleus"/>
    <property type="evidence" value="ECO:0007669"/>
    <property type="project" value="UniProtKB-SubCell"/>
</dbReference>
<dbReference type="GO" id="GO:0000981">
    <property type="term" value="F:DNA-binding transcription factor activity, RNA polymerase II-specific"/>
    <property type="evidence" value="ECO:0000318"/>
    <property type="project" value="GO_Central"/>
</dbReference>
<dbReference type="GO" id="GO:0000978">
    <property type="term" value="F:RNA polymerase II cis-regulatory region sequence-specific DNA binding"/>
    <property type="evidence" value="ECO:0000318"/>
    <property type="project" value="GO_Central"/>
</dbReference>
<dbReference type="GO" id="GO:0021984">
    <property type="term" value="P:adenohypophysis development"/>
    <property type="evidence" value="ECO:0000315"/>
    <property type="project" value="ZFIN"/>
</dbReference>
<dbReference type="GO" id="GO:0048593">
    <property type="term" value="P:camera-type eye morphogenesis"/>
    <property type="evidence" value="ECO:0000315"/>
    <property type="project" value="ZFIN"/>
</dbReference>
<dbReference type="GO" id="GO:0001708">
    <property type="term" value="P:cell fate specification"/>
    <property type="evidence" value="ECO:0000315"/>
    <property type="project" value="ZFIN"/>
</dbReference>
<dbReference type="GO" id="GO:0048596">
    <property type="term" value="P:embryonic camera-type eye morphogenesis"/>
    <property type="evidence" value="ECO:0000315"/>
    <property type="project" value="ZFIN"/>
</dbReference>
<dbReference type="GO" id="GO:0001654">
    <property type="term" value="P:eye development"/>
    <property type="evidence" value="ECO:0000315"/>
    <property type="project" value="ZFIN"/>
</dbReference>
<dbReference type="GO" id="GO:0060898">
    <property type="term" value="P:eye field cell fate commitment involved in camera-type eye formation"/>
    <property type="evidence" value="ECO:0000315"/>
    <property type="project" value="ZFIN"/>
</dbReference>
<dbReference type="GO" id="GO:0030900">
    <property type="term" value="P:forebrain development"/>
    <property type="evidence" value="ECO:0000315"/>
    <property type="project" value="ZFIN"/>
</dbReference>
<dbReference type="GO" id="GO:0021854">
    <property type="term" value="P:hypothalamus development"/>
    <property type="evidence" value="ECO:0000315"/>
    <property type="project" value="ZFIN"/>
</dbReference>
<dbReference type="GO" id="GO:0001755">
    <property type="term" value="P:neural crest cell migration"/>
    <property type="evidence" value="ECO:0000315"/>
    <property type="project" value="ZFIN"/>
</dbReference>
<dbReference type="GO" id="GO:0045944">
    <property type="term" value="P:positive regulation of transcription by RNA polymerase II"/>
    <property type="evidence" value="ECO:0007669"/>
    <property type="project" value="InterPro"/>
</dbReference>
<dbReference type="GO" id="GO:0006357">
    <property type="term" value="P:regulation of transcription by RNA polymerase II"/>
    <property type="evidence" value="ECO:0000318"/>
    <property type="project" value="GO_Central"/>
</dbReference>
<dbReference type="GO" id="GO:0060041">
    <property type="term" value="P:retina development in camera-type eye"/>
    <property type="evidence" value="ECO:0000315"/>
    <property type="project" value="ZFIN"/>
</dbReference>
<dbReference type="CDD" id="cd00086">
    <property type="entry name" value="homeodomain"/>
    <property type="match status" value="1"/>
</dbReference>
<dbReference type="FunFam" id="1.10.10.60:FF:000071">
    <property type="entry name" value="Retinal homeobox gene 2"/>
    <property type="match status" value="1"/>
</dbReference>
<dbReference type="Gene3D" id="1.10.10.60">
    <property type="entry name" value="Homeodomain-like"/>
    <property type="match status" value="1"/>
</dbReference>
<dbReference type="InterPro" id="IPR001356">
    <property type="entry name" value="HD"/>
</dbReference>
<dbReference type="InterPro" id="IPR017970">
    <property type="entry name" value="Homeobox_CS"/>
</dbReference>
<dbReference type="InterPro" id="IPR009057">
    <property type="entry name" value="Homeodomain-like_sf"/>
</dbReference>
<dbReference type="InterPro" id="IPR003654">
    <property type="entry name" value="OAR_dom"/>
</dbReference>
<dbReference type="InterPro" id="IPR043562">
    <property type="entry name" value="RAX/RAX2"/>
</dbReference>
<dbReference type="PANTHER" id="PTHR46271">
    <property type="entry name" value="HOMEOBOX PROTEIN, PUTATIVE-RELATED"/>
    <property type="match status" value="1"/>
</dbReference>
<dbReference type="PANTHER" id="PTHR46271:SF3">
    <property type="entry name" value="RETINAL HOMEOBOX PROTEIN RX"/>
    <property type="match status" value="1"/>
</dbReference>
<dbReference type="Pfam" id="PF00046">
    <property type="entry name" value="Homeodomain"/>
    <property type="match status" value="1"/>
</dbReference>
<dbReference type="Pfam" id="PF03826">
    <property type="entry name" value="OAR"/>
    <property type="match status" value="1"/>
</dbReference>
<dbReference type="SMART" id="SM00389">
    <property type="entry name" value="HOX"/>
    <property type="match status" value="1"/>
</dbReference>
<dbReference type="SUPFAM" id="SSF46689">
    <property type="entry name" value="Homeodomain-like"/>
    <property type="match status" value="1"/>
</dbReference>
<dbReference type="PROSITE" id="PS00027">
    <property type="entry name" value="HOMEOBOX_1"/>
    <property type="match status" value="1"/>
</dbReference>
<dbReference type="PROSITE" id="PS50071">
    <property type="entry name" value="HOMEOBOX_2"/>
    <property type="match status" value="1"/>
</dbReference>
<dbReference type="PROSITE" id="PS50803">
    <property type="entry name" value="OAR"/>
    <property type="match status" value="1"/>
</dbReference>
<accession>O42358</accession>
<organism>
    <name type="scientific">Danio rerio</name>
    <name type="common">Zebrafish</name>
    <name type="synonym">Brachydanio rerio</name>
    <dbReference type="NCBI Taxonomy" id="7955"/>
    <lineage>
        <taxon>Eukaryota</taxon>
        <taxon>Metazoa</taxon>
        <taxon>Chordata</taxon>
        <taxon>Craniata</taxon>
        <taxon>Vertebrata</taxon>
        <taxon>Euteleostomi</taxon>
        <taxon>Actinopterygii</taxon>
        <taxon>Neopterygii</taxon>
        <taxon>Teleostei</taxon>
        <taxon>Ostariophysi</taxon>
        <taxon>Cypriniformes</taxon>
        <taxon>Danionidae</taxon>
        <taxon>Danioninae</taxon>
        <taxon>Danio</taxon>
    </lineage>
</organism>
<feature type="chain" id="PRO_0000049285" description="Retinal homeobox protein Rx3">
    <location>
        <begin position="1"/>
        <end position="292"/>
    </location>
</feature>
<feature type="DNA-binding region" description="Homeobox" evidence="3">
    <location>
        <begin position="106"/>
        <end position="165"/>
    </location>
</feature>
<feature type="region of interest" description="Disordered" evidence="5">
    <location>
        <begin position="1"/>
        <end position="27"/>
    </location>
</feature>
<feature type="region of interest" description="Disordered" evidence="5">
    <location>
        <begin position="53"/>
        <end position="72"/>
    </location>
</feature>
<feature type="region of interest" description="Disordered" evidence="5">
    <location>
        <begin position="85"/>
        <end position="107"/>
    </location>
</feature>
<feature type="short sequence motif" description="Octapeptide motif">
    <location>
        <begin position="32"/>
        <end position="39"/>
    </location>
</feature>
<feature type="short sequence motif" description="OAR" evidence="4">
    <location>
        <begin position="272"/>
        <end position="285"/>
    </location>
</feature>
<feature type="short sequence motif" description="Nuclear localization signal" evidence="2">
    <location>
        <begin position="278"/>
        <end position="282"/>
    </location>
</feature>
<feature type="compositionally biased region" description="Basic and acidic residues" evidence="5">
    <location>
        <begin position="57"/>
        <end position="72"/>
    </location>
</feature>
<feature type="compositionally biased region" description="Basic and acidic residues" evidence="5">
    <location>
        <begin position="92"/>
        <end position="102"/>
    </location>
</feature>
<reference key="1">
    <citation type="journal article" date="1997" name="Nature">
        <title>The Rx homeobox gene is essential for vertebrate eye development.</title>
        <authorList>
            <person name="Mathers P.H."/>
            <person name="Grinberg A."/>
            <person name="Mahon K.A."/>
            <person name="Jamrich M."/>
        </authorList>
    </citation>
    <scope>NUCLEOTIDE SEQUENCE [MRNA]</scope>
    <source>
        <tissue>Embryo</tissue>
    </source>
</reference>
<comment type="function">
    <text evidence="1">Plays a critical role in eye formation by regulating the initial specification of retinal cells and/or their subsequent proliferation.</text>
</comment>
<comment type="subcellular location">
    <subcellularLocation>
        <location evidence="3 4">Nucleus</location>
    </subcellularLocation>
</comment>
<comment type="developmental stage">
    <text>Expressed in the ventral forebrain.</text>
</comment>
<comment type="similarity">
    <text evidence="6">Belongs to the paired homeobox family. Bicoid subfamily.</text>
</comment>
<protein>
    <recommendedName>
        <fullName>Retinal homeobox protein Rx3</fullName>
    </recommendedName>
</protein>
<proteinExistence type="evidence at transcript level"/>
<name>RX3_DANRE</name>
<gene>
    <name type="primary">rx3</name>
</gene>
<keyword id="KW-0217">Developmental protein</keyword>
<keyword id="KW-0238">DNA-binding</keyword>
<keyword id="KW-0371">Homeobox</keyword>
<keyword id="KW-0539">Nucleus</keyword>
<keyword id="KW-1185">Reference proteome</keyword>
<keyword id="KW-0804">Transcription</keyword>
<keyword id="KW-0805">Transcription regulation</keyword>